<protein>
    <recommendedName>
        <fullName>Globin</fullName>
    </recommendedName>
    <alternativeName>
        <fullName>Myoglobin</fullName>
    </alternativeName>
</protein>
<name>GLB_BUSCA</name>
<keyword id="KW-0963">Cytoplasm</keyword>
<keyword id="KW-0903">Direct protein sequencing</keyword>
<keyword id="KW-0349">Heme</keyword>
<keyword id="KW-0408">Iron</keyword>
<keyword id="KW-0479">Metal-binding</keyword>
<keyword id="KW-0514">Muscle protein</keyword>
<keyword id="KW-0561">Oxygen transport</keyword>
<keyword id="KW-0813">Transport</keyword>
<sequence>GLDGAQKTALKESWKVLGADGPTMMKNGSLLFGLLFKTYPDTKKHFKHFDDATFAAMDTTGVGKAHGVAVFSGLGSMICSIDDDDCVBGLAKKLSRNHLARGVSAADFKLLEAVFKZFLDEATQRKATDAQKDADGALLTMLIKAHV</sequence>
<reference key="1">
    <citation type="journal article" date="1977" name="FEBS Lett.">
        <title>The amino acid sequence of a dimeric myoglobin from the gastropod mollusc, Busycon canaliculatum L.</title>
        <authorList>
            <person name="Bonner A.G."/>
            <person name="Laursen R.A."/>
        </authorList>
    </citation>
    <scope>PROTEIN SEQUENCE</scope>
    <scope>SUBUNIT</scope>
    <source>
        <tissue>Radular muscle</tissue>
    </source>
</reference>
<accession>P02214</accession>
<evidence type="ECO:0000255" key="1">
    <source>
        <dbReference type="PROSITE-ProRule" id="PRU00238"/>
    </source>
</evidence>
<evidence type="ECO:0000269" key="2">
    <source>
    </source>
</evidence>
<proteinExistence type="evidence at protein level"/>
<dbReference type="PIR" id="A02536">
    <property type="entry name" value="GGGAB"/>
</dbReference>
<dbReference type="GO" id="GO:0005576">
    <property type="term" value="C:extracellular region"/>
    <property type="evidence" value="ECO:0007669"/>
    <property type="project" value="InterPro"/>
</dbReference>
<dbReference type="GO" id="GO:0005833">
    <property type="term" value="C:hemoglobin complex"/>
    <property type="evidence" value="ECO:0007669"/>
    <property type="project" value="InterPro"/>
</dbReference>
<dbReference type="GO" id="GO:0020037">
    <property type="term" value="F:heme binding"/>
    <property type="evidence" value="ECO:0007669"/>
    <property type="project" value="InterPro"/>
</dbReference>
<dbReference type="GO" id="GO:0046872">
    <property type="term" value="F:metal ion binding"/>
    <property type="evidence" value="ECO:0007669"/>
    <property type="project" value="UniProtKB-KW"/>
</dbReference>
<dbReference type="GO" id="GO:0019825">
    <property type="term" value="F:oxygen binding"/>
    <property type="evidence" value="ECO:0007669"/>
    <property type="project" value="InterPro"/>
</dbReference>
<dbReference type="GO" id="GO:0005344">
    <property type="term" value="F:oxygen carrier activity"/>
    <property type="evidence" value="ECO:0007669"/>
    <property type="project" value="UniProtKB-KW"/>
</dbReference>
<dbReference type="CDD" id="cd01040">
    <property type="entry name" value="Mb-like"/>
    <property type="match status" value="1"/>
</dbReference>
<dbReference type="Gene3D" id="1.10.490.10">
    <property type="entry name" value="Globins"/>
    <property type="match status" value="1"/>
</dbReference>
<dbReference type="InterPro" id="IPR002336">
    <property type="entry name" value="Erythrocruorin"/>
</dbReference>
<dbReference type="InterPro" id="IPR000971">
    <property type="entry name" value="Globin"/>
</dbReference>
<dbReference type="InterPro" id="IPR009050">
    <property type="entry name" value="Globin-like_sf"/>
</dbReference>
<dbReference type="InterPro" id="IPR012292">
    <property type="entry name" value="Globin/Proto"/>
</dbReference>
<dbReference type="InterPro" id="IPR044399">
    <property type="entry name" value="Mb-like_M"/>
</dbReference>
<dbReference type="PANTHER" id="PTHR47217">
    <property type="entry name" value="GLOBIN-LIKE PROTEIN"/>
    <property type="match status" value="1"/>
</dbReference>
<dbReference type="PANTHER" id="PTHR47217:SF1">
    <property type="entry name" value="GLOBIN-LIKE PROTEIN"/>
    <property type="match status" value="1"/>
</dbReference>
<dbReference type="Pfam" id="PF00042">
    <property type="entry name" value="Globin"/>
    <property type="match status" value="1"/>
</dbReference>
<dbReference type="PRINTS" id="PR00611">
    <property type="entry name" value="ERYTHCRUORIN"/>
</dbReference>
<dbReference type="SUPFAM" id="SSF46458">
    <property type="entry name" value="Globin-like"/>
    <property type="match status" value="1"/>
</dbReference>
<dbReference type="PROSITE" id="PS01033">
    <property type="entry name" value="GLOBIN"/>
    <property type="match status" value="1"/>
</dbReference>
<comment type="subunit">
    <text evidence="2">Homodimer.</text>
</comment>
<comment type="subcellular location">
    <subcellularLocation>
        <location>Cytoplasm</location>
    </subcellularLocation>
</comment>
<comment type="similarity">
    <text evidence="1">Belongs to the globin family.</text>
</comment>
<feature type="chain" id="PRO_0000052477" description="Globin">
    <location>
        <begin position="1"/>
        <end position="147"/>
    </location>
</feature>
<feature type="domain" description="Globin" evidence="1">
    <location>
        <begin position="1"/>
        <end position="147"/>
    </location>
</feature>
<feature type="binding site" description="distal binding residue" evidence="1">
    <location>
        <position position="66"/>
    </location>
    <ligand>
        <name>heme b</name>
        <dbReference type="ChEBI" id="CHEBI:60344"/>
    </ligand>
    <ligandPart>
        <name>Fe</name>
        <dbReference type="ChEBI" id="CHEBI:18248"/>
    </ligandPart>
</feature>
<feature type="binding site" description="proximal binding residue" evidence="1">
    <location>
        <position position="98"/>
    </location>
    <ligand>
        <name>heme b</name>
        <dbReference type="ChEBI" id="CHEBI:60344"/>
    </ligand>
    <ligandPart>
        <name>Fe</name>
        <dbReference type="ChEBI" id="CHEBI:18248"/>
    </ligandPart>
</feature>
<organism>
    <name type="scientific">Busycotypus canaliculatus</name>
    <name type="common">Channeled whelk</name>
    <name type="synonym">Busycon canaliculatum</name>
    <dbReference type="NCBI Taxonomy" id="57622"/>
    <lineage>
        <taxon>Eukaryota</taxon>
        <taxon>Metazoa</taxon>
        <taxon>Spiralia</taxon>
        <taxon>Lophotrochozoa</taxon>
        <taxon>Mollusca</taxon>
        <taxon>Gastropoda</taxon>
        <taxon>Caenogastropoda</taxon>
        <taxon>Neogastropoda</taxon>
        <taxon>Buccinoidea</taxon>
        <taxon>Melongenidae</taxon>
        <taxon>Busycotypus</taxon>
    </lineage>
</organism>